<evidence type="ECO:0000255" key="1">
    <source>
        <dbReference type="HAMAP-Rule" id="MF_01312"/>
    </source>
</evidence>
<proteinExistence type="inferred from homology"/>
<protein>
    <recommendedName>
        <fullName evidence="1">Anaerobic nitric oxide reductase flavorubredoxin</fullName>
        <shortName evidence="1">FlRd</shortName>
        <shortName evidence="1">FlavoRb</shortName>
    </recommendedName>
</protein>
<comment type="function">
    <text evidence="1">Anaerobic nitric oxide reductase; uses NADH to detoxify nitric oxide (NO), protecting several 4Fe-4S NO-sensitive enzymes. Has at least 2 reductase partners, only one of which (NorW, flavorubredoxin reductase) has been identified. NO probably binds to the di-iron center; electrons enter from the NorW at rubredoxin and are transferred sequentially to the FMN center and the di-iron center. Also able to function as an aerobic oxygen reductase.</text>
</comment>
<comment type="cofactor">
    <cofactor evidence="1">
        <name>Fe cation</name>
        <dbReference type="ChEBI" id="CHEBI:24875"/>
    </cofactor>
    <text evidence="1">Binds 3 Fe cations per monomer.</text>
</comment>
<comment type="cofactor">
    <cofactor evidence="1">
        <name>FMN</name>
        <dbReference type="ChEBI" id="CHEBI:58210"/>
    </cofactor>
    <text evidence="1">Binds 1 FMN per monomer.</text>
</comment>
<comment type="pathway">
    <text evidence="1">Nitrogen metabolism; nitric oxide reduction.</text>
</comment>
<comment type="subunit">
    <text evidence="1">Homotetramer.</text>
</comment>
<comment type="subcellular location">
    <subcellularLocation>
        <location evidence="1">Cytoplasm</location>
    </subcellularLocation>
</comment>
<comment type="similarity">
    <text evidence="1">In the N-terminal section; belongs to the zinc metallo-hydrolase group 3 family.</text>
</comment>
<reference key="1">
    <citation type="journal article" date="2006" name="BMC Genomics">
        <title>Complete genome sequence of Shigella flexneri 5b and comparison with Shigella flexneri 2a.</title>
        <authorList>
            <person name="Nie H."/>
            <person name="Yang F."/>
            <person name="Zhang X."/>
            <person name="Yang J."/>
            <person name="Chen L."/>
            <person name="Wang J."/>
            <person name="Xiong Z."/>
            <person name="Peng J."/>
            <person name="Sun L."/>
            <person name="Dong J."/>
            <person name="Xue Y."/>
            <person name="Xu X."/>
            <person name="Chen S."/>
            <person name="Yao Z."/>
            <person name="Shen Y."/>
            <person name="Jin Q."/>
        </authorList>
    </citation>
    <scope>NUCLEOTIDE SEQUENCE [LARGE SCALE GENOMIC DNA]</scope>
    <source>
        <strain>8401</strain>
    </source>
</reference>
<accession>Q0T1D5</accession>
<organism>
    <name type="scientific">Shigella flexneri serotype 5b (strain 8401)</name>
    <dbReference type="NCBI Taxonomy" id="373384"/>
    <lineage>
        <taxon>Bacteria</taxon>
        <taxon>Pseudomonadati</taxon>
        <taxon>Pseudomonadota</taxon>
        <taxon>Gammaproteobacteria</taxon>
        <taxon>Enterobacterales</taxon>
        <taxon>Enterobacteriaceae</taxon>
        <taxon>Shigella</taxon>
    </lineage>
</organism>
<dbReference type="EMBL" id="CP000266">
    <property type="protein sequence ID" value="ABF04880.1"/>
    <property type="molecule type" value="Genomic_DNA"/>
</dbReference>
<dbReference type="RefSeq" id="WP_000029605.1">
    <property type="nucleotide sequence ID" value="NC_008258.1"/>
</dbReference>
<dbReference type="SMR" id="Q0T1D5"/>
<dbReference type="KEGG" id="sfv:SFV_2795"/>
<dbReference type="HOGENOM" id="CLU_017490_0_1_6"/>
<dbReference type="UniPathway" id="UPA00638"/>
<dbReference type="Proteomes" id="UP000000659">
    <property type="component" value="Chromosome"/>
</dbReference>
<dbReference type="GO" id="GO:0005737">
    <property type="term" value="C:cytoplasm"/>
    <property type="evidence" value="ECO:0007669"/>
    <property type="project" value="UniProtKB-SubCell"/>
</dbReference>
<dbReference type="GO" id="GO:0009055">
    <property type="term" value="F:electron transfer activity"/>
    <property type="evidence" value="ECO:0007669"/>
    <property type="project" value="UniProtKB-UniRule"/>
</dbReference>
<dbReference type="GO" id="GO:0010181">
    <property type="term" value="F:FMN binding"/>
    <property type="evidence" value="ECO:0007669"/>
    <property type="project" value="InterPro"/>
</dbReference>
<dbReference type="GO" id="GO:0005506">
    <property type="term" value="F:iron ion binding"/>
    <property type="evidence" value="ECO:0007669"/>
    <property type="project" value="InterPro"/>
</dbReference>
<dbReference type="GO" id="GO:0016966">
    <property type="term" value="F:nitric oxide reductase activity"/>
    <property type="evidence" value="ECO:0007669"/>
    <property type="project" value="InterPro"/>
</dbReference>
<dbReference type="CDD" id="cd07709">
    <property type="entry name" value="flavodiiron_proteins_MBL-fold"/>
    <property type="match status" value="1"/>
</dbReference>
<dbReference type="CDD" id="cd00730">
    <property type="entry name" value="rubredoxin"/>
    <property type="match status" value="1"/>
</dbReference>
<dbReference type="FunFam" id="2.20.28.10:FF:000010">
    <property type="entry name" value="Anaerobic nitric oxide reductase flavorubredoxin"/>
    <property type="match status" value="1"/>
</dbReference>
<dbReference type="FunFam" id="3.40.50.360:FF:000012">
    <property type="entry name" value="Anaerobic nitric oxide reductase flavorubredoxin"/>
    <property type="match status" value="1"/>
</dbReference>
<dbReference type="FunFam" id="3.60.15.10:FF:000009">
    <property type="entry name" value="Anaerobic nitric oxide reductase flavorubredoxin"/>
    <property type="match status" value="1"/>
</dbReference>
<dbReference type="Gene3D" id="2.20.28.10">
    <property type="match status" value="1"/>
</dbReference>
<dbReference type="Gene3D" id="3.40.50.360">
    <property type="match status" value="1"/>
</dbReference>
<dbReference type="Gene3D" id="3.60.15.10">
    <property type="entry name" value="Ribonuclease Z/Hydroxyacylglutathione hydrolase-like"/>
    <property type="match status" value="1"/>
</dbReference>
<dbReference type="HAMAP" id="MF_01312">
    <property type="entry name" value="NorV"/>
    <property type="match status" value="1"/>
</dbReference>
<dbReference type="InterPro" id="IPR023957">
    <property type="entry name" value="Anaer_NO_rdtase_flvorubredoxin"/>
</dbReference>
<dbReference type="InterPro" id="IPR008254">
    <property type="entry name" value="Flavodoxin/NO_synth"/>
</dbReference>
<dbReference type="InterPro" id="IPR029039">
    <property type="entry name" value="Flavoprotein-like_sf"/>
</dbReference>
<dbReference type="InterPro" id="IPR001279">
    <property type="entry name" value="Metallo-B-lactamas"/>
</dbReference>
<dbReference type="InterPro" id="IPR045761">
    <property type="entry name" value="ODP_dom"/>
</dbReference>
<dbReference type="InterPro" id="IPR036866">
    <property type="entry name" value="RibonucZ/Hydroxyglut_hydro"/>
</dbReference>
<dbReference type="InterPro" id="IPR024934">
    <property type="entry name" value="Rubredoxin-like_dom"/>
</dbReference>
<dbReference type="InterPro" id="IPR016440">
    <property type="entry name" value="Rubredoxin-O_OxRdtase"/>
</dbReference>
<dbReference type="InterPro" id="IPR024935">
    <property type="entry name" value="Rubredoxin_dom"/>
</dbReference>
<dbReference type="NCBIfam" id="NF003954">
    <property type="entry name" value="PRK05452.1"/>
    <property type="match status" value="1"/>
</dbReference>
<dbReference type="PANTHER" id="PTHR43717">
    <property type="entry name" value="ANAEROBIC NITRIC OXIDE REDUCTASE FLAVORUBREDOXIN"/>
    <property type="match status" value="1"/>
</dbReference>
<dbReference type="PANTHER" id="PTHR43717:SF1">
    <property type="entry name" value="ANAEROBIC NITRIC OXIDE REDUCTASE FLAVORUBREDOXIN"/>
    <property type="match status" value="1"/>
</dbReference>
<dbReference type="Pfam" id="PF00258">
    <property type="entry name" value="Flavodoxin_1"/>
    <property type="match status" value="1"/>
</dbReference>
<dbReference type="Pfam" id="PF19583">
    <property type="entry name" value="ODP"/>
    <property type="match status" value="1"/>
</dbReference>
<dbReference type="Pfam" id="PF00301">
    <property type="entry name" value="Rubredoxin"/>
    <property type="match status" value="1"/>
</dbReference>
<dbReference type="PIRSF" id="PIRSF005243">
    <property type="entry name" value="ROO"/>
    <property type="match status" value="1"/>
</dbReference>
<dbReference type="PRINTS" id="PR00163">
    <property type="entry name" value="RUBREDOXIN"/>
</dbReference>
<dbReference type="SMART" id="SM00849">
    <property type="entry name" value="Lactamase_B"/>
    <property type="match status" value="1"/>
</dbReference>
<dbReference type="SUPFAM" id="SSF52218">
    <property type="entry name" value="Flavoproteins"/>
    <property type="match status" value="1"/>
</dbReference>
<dbReference type="SUPFAM" id="SSF56281">
    <property type="entry name" value="Metallo-hydrolase/oxidoreductase"/>
    <property type="match status" value="1"/>
</dbReference>
<dbReference type="SUPFAM" id="SSF57802">
    <property type="entry name" value="Rubredoxin-like"/>
    <property type="match status" value="1"/>
</dbReference>
<dbReference type="PROSITE" id="PS50902">
    <property type="entry name" value="FLAVODOXIN_LIKE"/>
    <property type="match status" value="1"/>
</dbReference>
<dbReference type="PROSITE" id="PS50903">
    <property type="entry name" value="RUBREDOXIN_LIKE"/>
    <property type="match status" value="1"/>
</dbReference>
<keyword id="KW-0963">Cytoplasm</keyword>
<keyword id="KW-0249">Electron transport</keyword>
<keyword id="KW-0285">Flavoprotein</keyword>
<keyword id="KW-0288">FMN</keyword>
<keyword id="KW-0408">Iron</keyword>
<keyword id="KW-0479">Metal-binding</keyword>
<keyword id="KW-0560">Oxidoreductase</keyword>
<keyword id="KW-0813">Transport</keyword>
<sequence>MSIVVKNNIHWVGQRDWEVRDFHGTEYKTLRGSSYNSYLIREEKNVLIDTVDHKFSREFVQNLRNEIDLADIDYIVINHAEEDHAGALTELMAQIPDTPIYCTANAIDSINGHHHHPEWNFNVVKTGDTLDIGNGKQLIFVETPMLHWPDSMMTYLTGDAVLFSNDAFGQHYCDEHLFNDEVDQTELFEQCQRYYANILTPFSRLVTPKITEILGFNLPVDMIATSHGVVWRDNPTQIVELYLKWAADYQEDRITIFYDTMSNNTRMMADAIAQGIAETDPRVAVKIFNVARSDKNEILTNVFRSKGVLVGTSTMNNVMMPKIAGLVEEMTGLRFRNKRASAFGSHGWSGGAMDRLSTRLQDAGFEMSLSLKAKWRPDQDALELCREHGREIARQWALAPLPQSTVNTVVKEETSATTTADLGPRMQCSVCQWIYDPAKGEPMQDVAPGTPWSEVPDNFLCPECSLGKDVFDELASEAK</sequence>
<gene>
    <name evidence="1" type="primary">norV</name>
    <name evidence="1" type="synonym">flrD</name>
    <name type="ordered locus">SFV_2795</name>
</gene>
<feature type="chain" id="PRO_0000305599" description="Anaerobic nitric oxide reductase flavorubredoxin">
    <location>
        <begin position="1"/>
        <end position="479"/>
    </location>
</feature>
<feature type="domain" description="Flavodoxin-like" evidence="1">
    <location>
        <begin position="254"/>
        <end position="393"/>
    </location>
</feature>
<feature type="domain" description="Rubredoxin-like" evidence="1">
    <location>
        <begin position="423"/>
        <end position="474"/>
    </location>
</feature>
<feature type="region of interest" description="Zinc metallo-hydrolase">
    <location>
        <begin position="30"/>
        <end position="210"/>
    </location>
</feature>
<feature type="binding site" evidence="1">
    <location>
        <position position="79"/>
    </location>
    <ligand>
        <name>Fe cation</name>
        <dbReference type="ChEBI" id="CHEBI:24875"/>
        <label>1</label>
    </ligand>
</feature>
<feature type="binding site" evidence="1">
    <location>
        <position position="81"/>
    </location>
    <ligand>
        <name>Fe cation</name>
        <dbReference type="ChEBI" id="CHEBI:24875"/>
        <label>1</label>
    </ligand>
</feature>
<feature type="binding site" evidence="1">
    <location>
        <position position="83"/>
    </location>
    <ligand>
        <name>Fe cation</name>
        <dbReference type="ChEBI" id="CHEBI:24875"/>
        <label>2</label>
    </ligand>
</feature>
<feature type="binding site" evidence="1">
    <location>
        <position position="147"/>
    </location>
    <ligand>
        <name>Fe cation</name>
        <dbReference type="ChEBI" id="CHEBI:24875"/>
        <label>1</label>
    </ligand>
</feature>
<feature type="binding site" evidence="1">
    <location>
        <position position="166"/>
    </location>
    <ligand>
        <name>Fe cation</name>
        <dbReference type="ChEBI" id="CHEBI:24875"/>
        <label>1</label>
    </ligand>
</feature>
<feature type="binding site" evidence="1">
    <location>
        <position position="166"/>
    </location>
    <ligand>
        <name>Fe cation</name>
        <dbReference type="ChEBI" id="CHEBI:24875"/>
        <label>2</label>
    </ligand>
</feature>
<feature type="binding site" evidence="1">
    <location>
        <position position="227"/>
    </location>
    <ligand>
        <name>Fe cation</name>
        <dbReference type="ChEBI" id="CHEBI:24875"/>
        <label>2</label>
    </ligand>
</feature>
<feature type="binding site" evidence="1">
    <location>
        <begin position="260"/>
        <end position="264"/>
    </location>
    <ligand>
        <name>FMN</name>
        <dbReference type="ChEBI" id="CHEBI:58210"/>
    </ligand>
</feature>
<feature type="binding site" evidence="1">
    <location>
        <begin position="342"/>
        <end position="369"/>
    </location>
    <ligand>
        <name>FMN</name>
        <dbReference type="ChEBI" id="CHEBI:58210"/>
    </ligand>
</feature>
<feature type="binding site" evidence="1">
    <location>
        <position position="428"/>
    </location>
    <ligand>
        <name>Fe cation</name>
        <dbReference type="ChEBI" id="CHEBI:24875"/>
        <label>3</label>
    </ligand>
</feature>
<feature type="binding site" evidence="1">
    <location>
        <position position="431"/>
    </location>
    <ligand>
        <name>Fe cation</name>
        <dbReference type="ChEBI" id="CHEBI:24875"/>
        <label>3</label>
    </ligand>
</feature>
<feature type="binding site" evidence="1">
    <location>
        <position position="461"/>
    </location>
    <ligand>
        <name>Fe cation</name>
        <dbReference type="ChEBI" id="CHEBI:24875"/>
        <label>3</label>
    </ligand>
</feature>
<feature type="binding site" evidence="1">
    <location>
        <position position="464"/>
    </location>
    <ligand>
        <name>Fe cation</name>
        <dbReference type="ChEBI" id="CHEBI:24875"/>
        <label>3</label>
    </ligand>
</feature>
<name>NORV_SHIF8</name>